<proteinExistence type="inferred from homology"/>
<keyword id="KW-0687">Ribonucleoprotein</keyword>
<keyword id="KW-0689">Ribosomal protein</keyword>
<feature type="chain" id="PRO_1000128154" description="Small ribosomal subunit protein uS9">
    <location>
        <begin position="1"/>
        <end position="129"/>
    </location>
</feature>
<name>RS9_CHLPM</name>
<evidence type="ECO:0000255" key="1">
    <source>
        <dbReference type="HAMAP-Rule" id="MF_00532"/>
    </source>
</evidence>
<evidence type="ECO:0000305" key="2"/>
<sequence length="129" mass="14532">MKEVIDTVGRRKTSVARVFMTPGKGRVIINKLPAEEYFKDEVKCRVALRPLVLAEKTEDFDIKVNVHGGGISGQSGAVSLAIARALAETDDSVRAVFKPERLLTRDPRMVERKKFGRKKARKSFQFSKR</sequence>
<organism>
    <name type="scientific">Chlorobium phaeovibrioides (strain DSM 265 / 1930)</name>
    <name type="common">Prosthecochloris vibrioformis (strain DSM 265)</name>
    <dbReference type="NCBI Taxonomy" id="290318"/>
    <lineage>
        <taxon>Bacteria</taxon>
        <taxon>Pseudomonadati</taxon>
        <taxon>Chlorobiota</taxon>
        <taxon>Chlorobiia</taxon>
        <taxon>Chlorobiales</taxon>
        <taxon>Chlorobiaceae</taxon>
        <taxon>Chlorobium/Pelodictyon group</taxon>
        <taxon>Chlorobium</taxon>
    </lineage>
</organism>
<comment type="similarity">
    <text evidence="1">Belongs to the universal ribosomal protein uS9 family.</text>
</comment>
<gene>
    <name evidence="1" type="primary">rpsI</name>
    <name type="ordered locus">Cvib_0457</name>
</gene>
<accession>A4SDC0</accession>
<reference key="1">
    <citation type="submission" date="2007-03" db="EMBL/GenBank/DDBJ databases">
        <title>Complete sequence of Prosthecochloris vibrioformis DSM 265.</title>
        <authorList>
            <consortium name="US DOE Joint Genome Institute"/>
            <person name="Copeland A."/>
            <person name="Lucas S."/>
            <person name="Lapidus A."/>
            <person name="Barry K."/>
            <person name="Detter J.C."/>
            <person name="Glavina del Rio T."/>
            <person name="Hammon N."/>
            <person name="Israni S."/>
            <person name="Pitluck S."/>
            <person name="Schmutz J."/>
            <person name="Larimer F."/>
            <person name="Land M."/>
            <person name="Hauser L."/>
            <person name="Mikhailova N."/>
            <person name="Li T."/>
            <person name="Overmann J."/>
            <person name="Schuster S.C."/>
            <person name="Bryant D.A."/>
            <person name="Richardson P."/>
        </authorList>
    </citation>
    <scope>NUCLEOTIDE SEQUENCE [LARGE SCALE GENOMIC DNA]</scope>
    <source>
        <strain>DSM 265 / 1930</strain>
    </source>
</reference>
<dbReference type="EMBL" id="CP000607">
    <property type="protein sequence ID" value="ABP36479.1"/>
    <property type="molecule type" value="Genomic_DNA"/>
</dbReference>
<dbReference type="SMR" id="A4SDC0"/>
<dbReference type="STRING" id="290318.Cvib_0457"/>
<dbReference type="KEGG" id="pvi:Cvib_0457"/>
<dbReference type="eggNOG" id="COG0103">
    <property type="taxonomic scope" value="Bacteria"/>
</dbReference>
<dbReference type="HOGENOM" id="CLU_046483_2_1_10"/>
<dbReference type="OrthoDB" id="9803965at2"/>
<dbReference type="GO" id="GO:0005737">
    <property type="term" value="C:cytoplasm"/>
    <property type="evidence" value="ECO:0007669"/>
    <property type="project" value="UniProtKB-ARBA"/>
</dbReference>
<dbReference type="GO" id="GO:0015935">
    <property type="term" value="C:small ribosomal subunit"/>
    <property type="evidence" value="ECO:0007669"/>
    <property type="project" value="TreeGrafter"/>
</dbReference>
<dbReference type="GO" id="GO:0003723">
    <property type="term" value="F:RNA binding"/>
    <property type="evidence" value="ECO:0007669"/>
    <property type="project" value="TreeGrafter"/>
</dbReference>
<dbReference type="GO" id="GO:0003735">
    <property type="term" value="F:structural constituent of ribosome"/>
    <property type="evidence" value="ECO:0007669"/>
    <property type="project" value="InterPro"/>
</dbReference>
<dbReference type="GO" id="GO:0006412">
    <property type="term" value="P:translation"/>
    <property type="evidence" value="ECO:0007669"/>
    <property type="project" value="UniProtKB-UniRule"/>
</dbReference>
<dbReference type="FunFam" id="3.30.230.10:FF:000001">
    <property type="entry name" value="30S ribosomal protein S9"/>
    <property type="match status" value="1"/>
</dbReference>
<dbReference type="Gene3D" id="3.30.230.10">
    <property type="match status" value="1"/>
</dbReference>
<dbReference type="HAMAP" id="MF_00532_B">
    <property type="entry name" value="Ribosomal_uS9_B"/>
    <property type="match status" value="1"/>
</dbReference>
<dbReference type="InterPro" id="IPR020568">
    <property type="entry name" value="Ribosomal_Su5_D2-typ_SF"/>
</dbReference>
<dbReference type="InterPro" id="IPR000754">
    <property type="entry name" value="Ribosomal_uS9"/>
</dbReference>
<dbReference type="InterPro" id="IPR023035">
    <property type="entry name" value="Ribosomal_uS9_bac/plastid"/>
</dbReference>
<dbReference type="InterPro" id="IPR020574">
    <property type="entry name" value="Ribosomal_uS9_CS"/>
</dbReference>
<dbReference type="InterPro" id="IPR014721">
    <property type="entry name" value="Ribsml_uS5_D2-typ_fold_subgr"/>
</dbReference>
<dbReference type="NCBIfam" id="NF001099">
    <property type="entry name" value="PRK00132.1"/>
    <property type="match status" value="1"/>
</dbReference>
<dbReference type="PANTHER" id="PTHR21569">
    <property type="entry name" value="RIBOSOMAL PROTEIN S9"/>
    <property type="match status" value="1"/>
</dbReference>
<dbReference type="PANTHER" id="PTHR21569:SF1">
    <property type="entry name" value="SMALL RIBOSOMAL SUBUNIT PROTEIN US9M"/>
    <property type="match status" value="1"/>
</dbReference>
<dbReference type="Pfam" id="PF00380">
    <property type="entry name" value="Ribosomal_S9"/>
    <property type="match status" value="1"/>
</dbReference>
<dbReference type="SUPFAM" id="SSF54211">
    <property type="entry name" value="Ribosomal protein S5 domain 2-like"/>
    <property type="match status" value="1"/>
</dbReference>
<dbReference type="PROSITE" id="PS00360">
    <property type="entry name" value="RIBOSOMAL_S9"/>
    <property type="match status" value="1"/>
</dbReference>
<protein>
    <recommendedName>
        <fullName evidence="1">Small ribosomal subunit protein uS9</fullName>
    </recommendedName>
    <alternativeName>
        <fullName evidence="2">30S ribosomal protein S9</fullName>
    </alternativeName>
</protein>